<evidence type="ECO:0000255" key="1">
    <source>
        <dbReference type="PROSITE-ProRule" id="PRU00395"/>
    </source>
</evidence>
<evidence type="ECO:0000269" key="2">
    <source>
    </source>
</evidence>
<evidence type="ECO:0000303" key="3">
    <source>
    </source>
</evidence>
<evidence type="ECO:0000305" key="4"/>
<protein>
    <recommendedName>
        <fullName evidence="3">Cyclotide vpub-B</fullName>
    </recommendedName>
</protein>
<keyword id="KW-0903">Direct protein sequencing</keyword>
<keyword id="KW-1015">Disulfide bond</keyword>
<keyword id="KW-0611">Plant defense</keyword>
<sequence>GIIPCGESCVFIPCITSVVGCSCKSKVCYKN</sequence>
<feature type="peptide" id="PRO_0000441371" description="Cyclotide vpub-B" evidence="2">
    <location>
        <begin position="1"/>
        <end position="31"/>
    </location>
</feature>
<feature type="disulfide bond" evidence="1">
    <location>
        <begin position="5"/>
        <end position="21"/>
    </location>
</feature>
<feature type="disulfide bond" evidence="1">
    <location>
        <begin position="9"/>
        <end position="23"/>
    </location>
</feature>
<feature type="disulfide bond" evidence="1">
    <location>
        <begin position="14"/>
        <end position="28"/>
    </location>
</feature>
<feature type="cross-link" description="Cyclopeptide (Gly-Asn)" evidence="3">
    <location>
        <begin position="1"/>
        <end position="31"/>
    </location>
</feature>
<reference evidence="4" key="1">
    <citation type="journal article" date="2017" name="J. Nat. Prod.">
        <title>Understanding the Diversity and Distribution of Cyclotides from Plants of Varied Genetic Origin.</title>
        <authorList>
            <person name="Ravipati A.S."/>
            <person name="Poth A.G."/>
            <person name="Troeira Henriques S."/>
            <person name="Bhandari M."/>
            <person name="Huang Y.H."/>
            <person name="Nino J."/>
            <person name="Colgrave M.L."/>
            <person name="Craik D.J."/>
        </authorList>
    </citation>
    <scope>PROTEIN SEQUENCE</scope>
</reference>
<name>CYVUB_VIOPU</name>
<dbReference type="SMR" id="C0HKK4"/>
<dbReference type="GO" id="GO:0006952">
    <property type="term" value="P:defense response"/>
    <property type="evidence" value="ECO:0007669"/>
    <property type="project" value="UniProtKB-KW"/>
</dbReference>
<dbReference type="InterPro" id="IPR005535">
    <property type="entry name" value="Cyclotide"/>
</dbReference>
<dbReference type="InterPro" id="IPR012323">
    <property type="entry name" value="Cyclotide_bracelet_CS"/>
</dbReference>
<dbReference type="InterPro" id="IPR036146">
    <property type="entry name" value="Cyclotide_sf"/>
</dbReference>
<dbReference type="Pfam" id="PF03784">
    <property type="entry name" value="Cyclotide"/>
    <property type="match status" value="1"/>
</dbReference>
<dbReference type="PIRSF" id="PIRSF037891">
    <property type="entry name" value="Cycloviolacin"/>
    <property type="match status" value="1"/>
</dbReference>
<dbReference type="SUPFAM" id="SSF57038">
    <property type="entry name" value="Cyclotides"/>
    <property type="match status" value="1"/>
</dbReference>
<dbReference type="PROSITE" id="PS51052">
    <property type="entry name" value="CYCLOTIDE"/>
    <property type="match status" value="1"/>
</dbReference>
<dbReference type="PROSITE" id="PS60008">
    <property type="entry name" value="CYCLOTIDE_BRACELET"/>
    <property type="match status" value="1"/>
</dbReference>
<organism evidence="3">
    <name type="scientific">Viola pubescens</name>
    <name type="common">Downy yellow violet</name>
    <dbReference type="NCBI Taxonomy" id="97445"/>
    <lineage>
        <taxon>Eukaryota</taxon>
        <taxon>Viridiplantae</taxon>
        <taxon>Streptophyta</taxon>
        <taxon>Embryophyta</taxon>
        <taxon>Tracheophyta</taxon>
        <taxon>Spermatophyta</taxon>
        <taxon>Magnoliopsida</taxon>
        <taxon>eudicotyledons</taxon>
        <taxon>Gunneridae</taxon>
        <taxon>Pentapetalae</taxon>
        <taxon>rosids</taxon>
        <taxon>fabids</taxon>
        <taxon>Malpighiales</taxon>
        <taxon>Violaceae</taxon>
        <taxon>Viola</taxon>
        <taxon>Viola subgen. Viola</taxon>
        <taxon>Viola sect. Chamaemelanium</taxon>
    </lineage>
</organism>
<proteinExistence type="evidence at protein level"/>
<comment type="function">
    <text evidence="1">Probably participates in a plant defense mechanism.</text>
</comment>
<comment type="domain">
    <text evidence="4">The presence of a 'disulfide through disulfide knot' structurally defines this protein as a knottin.</text>
</comment>
<comment type="PTM">
    <text evidence="1">This is a cyclic peptide.</text>
</comment>
<comment type="similarity">
    <text evidence="1">Belongs to the cyclotide family. Bracelet subfamily.</text>
</comment>
<comment type="caution">
    <text evidence="1">This peptide is cyclic. The start position was chosen by similarity to Oak1 (kalata B1) for which the DNA sequence is known.</text>
</comment>
<accession>C0HKK4</accession>